<dbReference type="EMBL" id="CP001020">
    <property type="protein sequence ID" value="ACJ20546.1"/>
    <property type="molecule type" value="Genomic_DNA"/>
</dbReference>
<dbReference type="RefSeq" id="WP_005771287.1">
    <property type="nucleotide sequence ID" value="NC_011528.1"/>
</dbReference>
<dbReference type="SMR" id="B6J8E7"/>
<dbReference type="KEGG" id="cbc:CbuK_1369"/>
<dbReference type="HOGENOM" id="CLU_129084_2_1_6"/>
<dbReference type="GO" id="GO:0015934">
    <property type="term" value="C:large ribosomal subunit"/>
    <property type="evidence" value="ECO:0007669"/>
    <property type="project" value="InterPro"/>
</dbReference>
<dbReference type="GO" id="GO:0003735">
    <property type="term" value="F:structural constituent of ribosome"/>
    <property type="evidence" value="ECO:0007669"/>
    <property type="project" value="InterPro"/>
</dbReference>
<dbReference type="GO" id="GO:0006412">
    <property type="term" value="P:translation"/>
    <property type="evidence" value="ECO:0007669"/>
    <property type="project" value="UniProtKB-UniRule"/>
</dbReference>
<dbReference type="HAMAP" id="MF_00340">
    <property type="entry name" value="Ribosomal_bL32"/>
    <property type="match status" value="1"/>
</dbReference>
<dbReference type="InterPro" id="IPR002677">
    <property type="entry name" value="Ribosomal_bL32"/>
</dbReference>
<dbReference type="InterPro" id="IPR044957">
    <property type="entry name" value="Ribosomal_bL32_bact"/>
</dbReference>
<dbReference type="InterPro" id="IPR011332">
    <property type="entry name" value="Ribosomal_zn-bd"/>
</dbReference>
<dbReference type="NCBIfam" id="TIGR01031">
    <property type="entry name" value="rpmF_bact"/>
    <property type="match status" value="1"/>
</dbReference>
<dbReference type="PANTHER" id="PTHR35534">
    <property type="entry name" value="50S RIBOSOMAL PROTEIN L32"/>
    <property type="match status" value="1"/>
</dbReference>
<dbReference type="PANTHER" id="PTHR35534:SF1">
    <property type="entry name" value="LARGE RIBOSOMAL SUBUNIT PROTEIN BL32"/>
    <property type="match status" value="1"/>
</dbReference>
<dbReference type="Pfam" id="PF01783">
    <property type="entry name" value="Ribosomal_L32p"/>
    <property type="match status" value="1"/>
</dbReference>
<dbReference type="SUPFAM" id="SSF57829">
    <property type="entry name" value="Zn-binding ribosomal proteins"/>
    <property type="match status" value="1"/>
</dbReference>
<accession>B6J8E7</accession>
<organism>
    <name type="scientific">Coxiella burnetii (strain CbuK_Q154)</name>
    <name type="common">Coxiella burnetii (strain Q154)</name>
    <dbReference type="NCBI Taxonomy" id="434924"/>
    <lineage>
        <taxon>Bacteria</taxon>
        <taxon>Pseudomonadati</taxon>
        <taxon>Pseudomonadota</taxon>
        <taxon>Gammaproteobacteria</taxon>
        <taxon>Legionellales</taxon>
        <taxon>Coxiellaceae</taxon>
        <taxon>Coxiella</taxon>
    </lineage>
</organism>
<keyword id="KW-0687">Ribonucleoprotein</keyword>
<keyword id="KW-0689">Ribosomal protein</keyword>
<comment type="similarity">
    <text evidence="1">Belongs to the bacterial ribosomal protein bL32 family.</text>
</comment>
<evidence type="ECO:0000255" key="1">
    <source>
        <dbReference type="HAMAP-Rule" id="MF_00340"/>
    </source>
</evidence>
<evidence type="ECO:0000256" key="2">
    <source>
        <dbReference type="SAM" id="MobiDB-lite"/>
    </source>
</evidence>
<evidence type="ECO:0000305" key="3"/>
<name>RL32_COXB1</name>
<gene>
    <name evidence="1" type="primary">rpmF</name>
    <name type="ordered locus">CbuK_1369</name>
</gene>
<proteinExistence type="inferred from homology"/>
<protein>
    <recommendedName>
        <fullName evidence="1">Large ribosomal subunit protein bL32</fullName>
    </recommendedName>
    <alternativeName>
        <fullName evidence="3">50S ribosomal protein L32</fullName>
    </alternativeName>
</protein>
<feature type="chain" id="PRO_1000120108" description="Large ribosomal subunit protein bL32">
    <location>
        <begin position="1"/>
        <end position="64"/>
    </location>
</feature>
<feature type="region of interest" description="Disordered" evidence="2">
    <location>
        <begin position="1"/>
        <end position="64"/>
    </location>
</feature>
<feature type="compositionally biased region" description="Basic residues" evidence="2">
    <location>
        <begin position="1"/>
        <end position="16"/>
    </location>
</feature>
<sequence length="64" mass="7468">MAVQKSRKTRSRRGMRRSHDALRGAMLSKDPTTGETHLRHHISPEGYYKGRQILTPKESYEDEE</sequence>
<reference key="1">
    <citation type="journal article" date="2009" name="Infect. Immun.">
        <title>Comparative genomics reveal extensive transposon-mediated genomic plasticity and diversity among potential effector proteins within the genus Coxiella.</title>
        <authorList>
            <person name="Beare P.A."/>
            <person name="Unsworth N."/>
            <person name="Andoh M."/>
            <person name="Voth D.E."/>
            <person name="Omsland A."/>
            <person name="Gilk S.D."/>
            <person name="Williams K.P."/>
            <person name="Sobral B.W."/>
            <person name="Kupko J.J. III"/>
            <person name="Porcella S.F."/>
            <person name="Samuel J.E."/>
            <person name="Heinzen R.A."/>
        </authorList>
    </citation>
    <scope>NUCLEOTIDE SEQUENCE [LARGE SCALE GENOMIC DNA]</scope>
    <source>
        <strain>CbuK_Q154</strain>
    </source>
</reference>